<sequence>MSKPTVIVIFMAILVLGMATKETQGANCVNYFEITFPEVCEANWCAAECLKAYKNGKGTCWQKFCQCVYDC</sequence>
<proteinExistence type="inferred from homology"/>
<comment type="subcellular location">
    <subcellularLocation>
        <location evidence="1">Secreted</location>
    </subcellularLocation>
</comment>
<comment type="similarity">
    <text evidence="3">Belongs to the DEFL family.</text>
</comment>
<comment type="sequence caution" evidence="3">
    <conflict type="erroneous termination">
        <sequence resource="EMBL-CDS" id="ABK27953"/>
    </conflict>
    <text>Extended C-terminus.</text>
</comment>
<feature type="signal peptide" evidence="2">
    <location>
        <begin position="1"/>
        <end position="25"/>
    </location>
</feature>
<feature type="chain" id="PRO_0000017258" description="Defensin-like protein 124">
    <location>
        <begin position="26"/>
        <end position="71"/>
    </location>
</feature>
<feature type="disulfide bond" evidence="1">
    <location>
        <begin position="28"/>
        <end position="71"/>
    </location>
</feature>
<feature type="disulfide bond" evidence="1">
    <location>
        <begin position="40"/>
        <end position="60"/>
    </location>
</feature>
<feature type="disulfide bond" evidence="1">
    <location>
        <begin position="45"/>
        <end position="65"/>
    </location>
</feature>
<feature type="disulfide bond" evidence="1">
    <location>
        <begin position="49"/>
        <end position="67"/>
    </location>
</feature>
<dbReference type="EMBL" id="AC007504">
    <property type="status" value="NOT_ANNOTATED_CDS"/>
    <property type="molecule type" value="Genomic_DNA"/>
</dbReference>
<dbReference type="EMBL" id="CP002684">
    <property type="protein sequence ID" value="AEE32430.1"/>
    <property type="molecule type" value="Genomic_DNA"/>
</dbReference>
<dbReference type="EMBL" id="DQ912253">
    <property type="protein sequence ID" value="ABK27953.1"/>
    <property type="status" value="ALT_SEQ"/>
    <property type="molecule type" value="mRNA"/>
</dbReference>
<dbReference type="EMBL" id="EF182793">
    <property type="status" value="NOT_ANNOTATED_CDS"/>
    <property type="molecule type" value="mRNA"/>
</dbReference>
<dbReference type="RefSeq" id="NP_001031162.1">
    <property type="nucleotide sequence ID" value="NM_001036085.2"/>
</dbReference>
<dbReference type="SMR" id="P82731"/>
<dbReference type="BioGRID" id="527776">
    <property type="interactions" value="2"/>
</dbReference>
<dbReference type="PaxDb" id="3702-AT1G49435.1"/>
<dbReference type="EnsemblPlants" id="AT1G49435.1">
    <property type="protein sequence ID" value="AT1G49435.1"/>
    <property type="gene ID" value="AT1G49435"/>
</dbReference>
<dbReference type="GeneID" id="3767415"/>
<dbReference type="Gramene" id="AT1G49435.1">
    <property type="protein sequence ID" value="AT1G49435.1"/>
    <property type="gene ID" value="AT1G49435"/>
</dbReference>
<dbReference type="KEGG" id="ath:AT1G49435"/>
<dbReference type="Araport" id="AT1G49435"/>
<dbReference type="TAIR" id="AT1G49435">
    <property type="gene designation" value="LCR16"/>
</dbReference>
<dbReference type="HOGENOM" id="CLU_182511_2_0_1"/>
<dbReference type="InParanoid" id="P82731"/>
<dbReference type="OMA" id="VCEANWC"/>
<dbReference type="OrthoDB" id="1021021at2759"/>
<dbReference type="PhylomeDB" id="P82731"/>
<dbReference type="PRO" id="PR:P82731"/>
<dbReference type="Proteomes" id="UP000006548">
    <property type="component" value="Chromosome 1"/>
</dbReference>
<dbReference type="ExpressionAtlas" id="P82731">
    <property type="expression patterns" value="baseline and differential"/>
</dbReference>
<dbReference type="GO" id="GO:0005576">
    <property type="term" value="C:extracellular region"/>
    <property type="evidence" value="ECO:0007669"/>
    <property type="project" value="UniProtKB-SubCell"/>
</dbReference>
<dbReference type="GO" id="GO:0050832">
    <property type="term" value="P:defense response to fungus"/>
    <property type="evidence" value="ECO:0007669"/>
    <property type="project" value="UniProtKB-KW"/>
</dbReference>
<dbReference type="GO" id="GO:0031640">
    <property type="term" value="P:killing of cells of another organism"/>
    <property type="evidence" value="ECO:0007669"/>
    <property type="project" value="UniProtKB-KW"/>
</dbReference>
<dbReference type="InterPro" id="IPR010851">
    <property type="entry name" value="DEFL"/>
</dbReference>
<dbReference type="PANTHER" id="PTHR33830:SF10">
    <property type="entry name" value="DEFENSIN-LIKE PROTEIN 122-RELATED"/>
    <property type="match status" value="1"/>
</dbReference>
<dbReference type="PANTHER" id="PTHR33830">
    <property type="entry name" value="DEFENSIN-LIKE PROTEIN 184-RELATED"/>
    <property type="match status" value="1"/>
</dbReference>
<dbReference type="Pfam" id="PF07333">
    <property type="entry name" value="SLR1-BP"/>
    <property type="match status" value="1"/>
</dbReference>
<keyword id="KW-0929">Antimicrobial</keyword>
<keyword id="KW-1015">Disulfide bond</keyword>
<keyword id="KW-0295">Fungicide</keyword>
<keyword id="KW-0611">Plant defense</keyword>
<keyword id="KW-1185">Reference proteome</keyword>
<keyword id="KW-0964">Secreted</keyword>
<keyword id="KW-0732">Signal</keyword>
<name>DF124_ARATH</name>
<protein>
    <recommendedName>
        <fullName>Defensin-like protein 124</fullName>
    </recommendedName>
    <alternativeName>
        <fullName>Low-molecular-weight cysteine-rich protein 16</fullName>
        <shortName>Protein LCR16</shortName>
    </alternativeName>
</protein>
<reference evidence="3" key="1">
    <citation type="journal article" date="2000" name="Nature">
        <title>Sequence and analysis of chromosome 1 of the plant Arabidopsis thaliana.</title>
        <authorList>
            <person name="Theologis A."/>
            <person name="Ecker J.R."/>
            <person name="Palm C.J."/>
            <person name="Federspiel N.A."/>
            <person name="Kaul S."/>
            <person name="White O."/>
            <person name="Alonso J."/>
            <person name="Altafi H."/>
            <person name="Araujo R."/>
            <person name="Bowman C.L."/>
            <person name="Brooks S.Y."/>
            <person name="Buehler E."/>
            <person name="Chan A."/>
            <person name="Chao Q."/>
            <person name="Chen H."/>
            <person name="Cheuk R.F."/>
            <person name="Chin C.W."/>
            <person name="Chung M.K."/>
            <person name="Conn L."/>
            <person name="Conway A.B."/>
            <person name="Conway A.R."/>
            <person name="Creasy T.H."/>
            <person name="Dewar K."/>
            <person name="Dunn P."/>
            <person name="Etgu P."/>
            <person name="Feldblyum T.V."/>
            <person name="Feng J.-D."/>
            <person name="Fong B."/>
            <person name="Fujii C.Y."/>
            <person name="Gill J.E."/>
            <person name="Goldsmith A.D."/>
            <person name="Haas B."/>
            <person name="Hansen N.F."/>
            <person name="Hughes B."/>
            <person name="Huizar L."/>
            <person name="Hunter J.L."/>
            <person name="Jenkins J."/>
            <person name="Johnson-Hopson C."/>
            <person name="Khan S."/>
            <person name="Khaykin E."/>
            <person name="Kim C.J."/>
            <person name="Koo H.L."/>
            <person name="Kremenetskaia I."/>
            <person name="Kurtz D.B."/>
            <person name="Kwan A."/>
            <person name="Lam B."/>
            <person name="Langin-Hooper S."/>
            <person name="Lee A."/>
            <person name="Lee J.M."/>
            <person name="Lenz C.A."/>
            <person name="Li J.H."/>
            <person name="Li Y.-P."/>
            <person name="Lin X."/>
            <person name="Liu S.X."/>
            <person name="Liu Z.A."/>
            <person name="Luros J.S."/>
            <person name="Maiti R."/>
            <person name="Marziali A."/>
            <person name="Militscher J."/>
            <person name="Miranda M."/>
            <person name="Nguyen M."/>
            <person name="Nierman W.C."/>
            <person name="Osborne B.I."/>
            <person name="Pai G."/>
            <person name="Peterson J."/>
            <person name="Pham P.K."/>
            <person name="Rizzo M."/>
            <person name="Rooney T."/>
            <person name="Rowley D."/>
            <person name="Sakano H."/>
            <person name="Salzberg S.L."/>
            <person name="Schwartz J.R."/>
            <person name="Shinn P."/>
            <person name="Southwick A.M."/>
            <person name="Sun H."/>
            <person name="Tallon L.J."/>
            <person name="Tambunga G."/>
            <person name="Toriumi M.J."/>
            <person name="Town C.D."/>
            <person name="Utterback T."/>
            <person name="Van Aken S."/>
            <person name="Vaysberg M."/>
            <person name="Vysotskaia V.S."/>
            <person name="Walker M."/>
            <person name="Wu D."/>
            <person name="Yu G."/>
            <person name="Fraser C.M."/>
            <person name="Venter J.C."/>
            <person name="Davis R.W."/>
        </authorList>
    </citation>
    <scope>NUCLEOTIDE SEQUENCE [LARGE SCALE GENOMIC DNA]</scope>
    <source>
        <strain>cv. Columbia</strain>
    </source>
</reference>
<reference key="2">
    <citation type="journal article" date="2017" name="Plant J.">
        <title>Araport11: a complete reannotation of the Arabidopsis thaliana reference genome.</title>
        <authorList>
            <person name="Cheng C.Y."/>
            <person name="Krishnakumar V."/>
            <person name="Chan A.P."/>
            <person name="Thibaud-Nissen F."/>
            <person name="Schobel S."/>
            <person name="Town C.D."/>
        </authorList>
    </citation>
    <scope>GENOME REANNOTATION</scope>
    <source>
        <strain>cv. Columbia</strain>
    </source>
</reference>
<reference key="3">
    <citation type="journal article" date="2006" name="Plant Biotechnol. J.">
        <title>Simultaneous high-throughput recombinational cloning of open reading frames in closed and open configurations.</title>
        <authorList>
            <person name="Underwood B.A."/>
            <person name="Vanderhaeghen R."/>
            <person name="Whitford R."/>
            <person name="Town C.D."/>
            <person name="Hilson P."/>
        </authorList>
    </citation>
    <scope>NUCLEOTIDE SEQUENCE [LARGE SCALE MRNA]</scope>
    <source>
        <strain>cv. Columbia</strain>
    </source>
</reference>
<reference key="4">
    <citation type="journal article" date="2007" name="Plant J.">
        <title>Small cysteine-rich peptides resembling antimicrobial peptides have been under-predicted in plants.</title>
        <authorList>
            <person name="Silverstein K.A.T."/>
            <person name="Moskal W.A. Jr."/>
            <person name="Wu H.C."/>
            <person name="Underwood B.A."/>
            <person name="Graham M.A."/>
            <person name="Town C.D."/>
            <person name="VandenBosch K.A."/>
        </authorList>
    </citation>
    <scope>NUCLEOTIDE SEQUENCE [LARGE SCALE MRNA]</scope>
    <source>
        <strain>cv. Columbia</strain>
    </source>
</reference>
<reference evidence="3" key="5">
    <citation type="journal article" date="2001" name="Plant Mol. Biol.">
        <title>Two large Arabidopsis thaliana gene families are homologous to the Brassica gene superfamily that encodes pollen coat proteins and the male component of the self-incompatibility response.</title>
        <authorList>
            <person name="Vanoosthuyse V."/>
            <person name="Miege C."/>
            <person name="Dumas C."/>
            <person name="Cock J.M."/>
        </authorList>
    </citation>
    <scope>IDENTIFICATION</scope>
</reference>
<reference key="6">
    <citation type="journal article" date="2005" name="Plant Physiol.">
        <title>Genome organization of more than 300 defensin-like genes in Arabidopsis.</title>
        <authorList>
            <person name="Silverstein K.A.T."/>
            <person name="Graham M.A."/>
            <person name="Paape T.D."/>
            <person name="VandenBosch K.A."/>
        </authorList>
    </citation>
    <scope>GENE FAMILY</scope>
</reference>
<organism evidence="3">
    <name type="scientific">Arabidopsis thaliana</name>
    <name type="common">Mouse-ear cress</name>
    <dbReference type="NCBI Taxonomy" id="3702"/>
    <lineage>
        <taxon>Eukaryota</taxon>
        <taxon>Viridiplantae</taxon>
        <taxon>Streptophyta</taxon>
        <taxon>Embryophyta</taxon>
        <taxon>Tracheophyta</taxon>
        <taxon>Spermatophyta</taxon>
        <taxon>Magnoliopsida</taxon>
        <taxon>eudicotyledons</taxon>
        <taxon>Gunneridae</taxon>
        <taxon>Pentapetalae</taxon>
        <taxon>rosids</taxon>
        <taxon>malvids</taxon>
        <taxon>Brassicales</taxon>
        <taxon>Brassicaceae</taxon>
        <taxon>Camelineae</taxon>
        <taxon>Arabidopsis</taxon>
    </lineage>
</organism>
<evidence type="ECO:0000250" key="1"/>
<evidence type="ECO:0000255" key="2"/>
<evidence type="ECO:0000305" key="3"/>
<gene>
    <name type="primary">LCR16</name>
    <name type="ordered locus">At1g49435</name>
    <name type="ORF">F13F21</name>
</gene>
<accession>P82731</accession>
<accession>A0MJV4</accession>